<reference key="1">
    <citation type="journal article" date="1996" name="Insect Biochem. Mol. Biol.">
        <title>Purification and characterization of five cuticular proteins from the spider Araneus diadematus.</title>
        <authorList>
            <person name="Norup T."/>
            <person name="Berg T."/>
            <person name="Stenholm H."/>
            <person name="Andersen S.O."/>
            <person name="Hoejrup P."/>
        </authorList>
    </citation>
    <scope>PROTEIN SEQUENCE</scope>
    <scope>MASS SPECTROMETRY</scope>
    <source>
        <tissue>Cuticle</tissue>
    </source>
</reference>
<keyword id="KW-0193">Cuticle</keyword>
<keyword id="KW-0903">Direct protein sequencing</keyword>
<organism>
    <name type="scientific">Araneus diadematus</name>
    <name type="common">European garden spider</name>
    <name type="synonym">Cross spider</name>
    <dbReference type="NCBI Taxonomy" id="45920"/>
    <lineage>
        <taxon>Eukaryota</taxon>
        <taxon>Metazoa</taxon>
        <taxon>Ecdysozoa</taxon>
        <taxon>Arthropoda</taxon>
        <taxon>Chelicerata</taxon>
        <taxon>Arachnida</taxon>
        <taxon>Araneae</taxon>
        <taxon>Araneomorphae</taxon>
        <taxon>Entelegynae</taxon>
        <taxon>Araneoidea</taxon>
        <taxon>Araneidae</taxon>
        <taxon>Araneus</taxon>
    </lineage>
</organism>
<name>CU19_ARADI</name>
<sequence>ADMGMNIAGGAYNFGYNTGDAGGHSRVESGSGSSVAGSYSYVDANGDRRTVQYTAGPGGYQASGDVGVDRRTAAAAAALAAMAPKAPIPAPAAAPAAPWYNPVPVAPAIMAHPGGYIAKW</sequence>
<accession>P80515</accession>
<dbReference type="SMR" id="P80515"/>
<dbReference type="GO" id="GO:0062129">
    <property type="term" value="C:chitin-based extracellular matrix"/>
    <property type="evidence" value="ECO:0007669"/>
    <property type="project" value="TreeGrafter"/>
</dbReference>
<dbReference type="GO" id="GO:0008010">
    <property type="term" value="F:structural constituent of chitin-based larval cuticle"/>
    <property type="evidence" value="ECO:0007669"/>
    <property type="project" value="TreeGrafter"/>
</dbReference>
<dbReference type="InterPro" id="IPR031311">
    <property type="entry name" value="CHIT_BIND_RR_consensus"/>
</dbReference>
<dbReference type="InterPro" id="IPR050468">
    <property type="entry name" value="Cuticle_Struct_Prot"/>
</dbReference>
<dbReference type="InterPro" id="IPR000618">
    <property type="entry name" value="Insect_cuticle"/>
</dbReference>
<dbReference type="PANTHER" id="PTHR10380">
    <property type="entry name" value="CUTICLE PROTEIN"/>
    <property type="match status" value="1"/>
</dbReference>
<dbReference type="PANTHER" id="PTHR10380:SF173">
    <property type="entry name" value="CUTICULAR PROTEIN 47EF, ISOFORM C-RELATED"/>
    <property type="match status" value="1"/>
</dbReference>
<dbReference type="Pfam" id="PF00379">
    <property type="entry name" value="Chitin_bind_4"/>
    <property type="match status" value="1"/>
</dbReference>
<dbReference type="PRINTS" id="PR00947">
    <property type="entry name" value="CUTICLE"/>
</dbReference>
<dbReference type="PROSITE" id="PS00233">
    <property type="entry name" value="CHIT_BIND_RR_1"/>
    <property type="match status" value="1"/>
</dbReference>
<dbReference type="PROSITE" id="PS51155">
    <property type="entry name" value="CHIT_BIND_RR_2"/>
    <property type="match status" value="1"/>
</dbReference>
<evidence type="ECO:0000255" key="1">
    <source>
        <dbReference type="PROSITE-ProRule" id="PRU00497"/>
    </source>
</evidence>
<evidence type="ECO:0000269" key="2">
    <source>
    </source>
</evidence>
<feature type="chain" id="PRO_0000196145" description="Adult-specific rigid cuticular protein 11.9">
    <location>
        <begin position="1"/>
        <end position="120"/>
    </location>
</feature>
<feature type="domain" description="Chitin-binding type R&amp;R" evidence="1">
    <location>
        <begin position="9"/>
        <end position="87"/>
    </location>
</feature>
<comment type="function">
    <text>Component of the rigid cuticle of the spider.</text>
</comment>
<comment type="mass spectrometry"/>
<proteinExistence type="evidence at protein level"/>
<protein>
    <recommendedName>
        <fullName>Adult-specific rigid cuticular protein 11.9</fullName>
        <shortName>ACP 11.9</shortName>
    </recommendedName>
</protein>